<keyword id="KW-0963">Cytoplasm</keyword>
<keyword id="KW-0342">GTP-binding</keyword>
<keyword id="KW-0436">Ligase</keyword>
<keyword id="KW-0460">Magnesium</keyword>
<keyword id="KW-0479">Metal-binding</keyword>
<keyword id="KW-0547">Nucleotide-binding</keyword>
<keyword id="KW-0658">Purine biosynthesis</keyword>
<keyword id="KW-1185">Reference proteome</keyword>
<name>PURA_MYCMM</name>
<organism>
    <name type="scientific">Mycobacterium marinum (strain ATCC BAA-535 / M)</name>
    <dbReference type="NCBI Taxonomy" id="216594"/>
    <lineage>
        <taxon>Bacteria</taxon>
        <taxon>Bacillati</taxon>
        <taxon>Actinomycetota</taxon>
        <taxon>Actinomycetes</taxon>
        <taxon>Mycobacteriales</taxon>
        <taxon>Mycobacteriaceae</taxon>
        <taxon>Mycobacterium</taxon>
        <taxon>Mycobacterium ulcerans group</taxon>
    </lineage>
</organism>
<sequence length="432" mass="46690">MPAIVLIGAQWGDEGKGKATDLLGGRVQWVVRYQGGNNAGHTVVLPSGENFALHLIPSGVLTPGVTNVIGNGVVIDPGVLLSELKGLEDRGVDTSKLLISADAHLLMPYHVAIDKVTERYMGSKKIGTTGRGIGPCYQDKVARMGIRVADVLDTDQLAHKVEAALEFKNQVLVKIYNRKALDPDQVVESLLEQAEGFRHRIADARLLLNNALEAGETVLLEGSQGTLLDVDHGTYPYVTSSNPTAGGAAVGSGIGPTRIRTVLGILKAYTTRVGSGPFPTELFDESGEYLSKTGGEFGVTTGRRRRCGWFDAVIARYATRVNGITDYFLTKLDVLSSLETVPVCVGYEIDGKRTSEMPMTQSDLCRAKPVYEELPGWWEDISAAREFDDLPAKARDYVLRLEEIAGAPVSCIGVGPGRDQTIVRRDILQERA</sequence>
<gene>
    <name evidence="1" type="primary">purA</name>
    <name type="ordered locus">MMAR_0680</name>
</gene>
<evidence type="ECO:0000255" key="1">
    <source>
        <dbReference type="HAMAP-Rule" id="MF_00011"/>
    </source>
</evidence>
<reference key="1">
    <citation type="journal article" date="2008" name="Genome Res.">
        <title>Insights from the complete genome sequence of Mycobacterium marinum on the evolution of Mycobacterium tuberculosis.</title>
        <authorList>
            <person name="Stinear T.P."/>
            <person name="Seemann T."/>
            <person name="Harrison P.F."/>
            <person name="Jenkin G.A."/>
            <person name="Davies J.K."/>
            <person name="Johnson P.D."/>
            <person name="Abdellah Z."/>
            <person name="Arrowsmith C."/>
            <person name="Chillingworth T."/>
            <person name="Churcher C."/>
            <person name="Clarke K."/>
            <person name="Cronin A."/>
            <person name="Davis P."/>
            <person name="Goodhead I."/>
            <person name="Holroyd N."/>
            <person name="Jagels K."/>
            <person name="Lord A."/>
            <person name="Moule S."/>
            <person name="Mungall K."/>
            <person name="Norbertczak H."/>
            <person name="Quail M.A."/>
            <person name="Rabbinowitsch E."/>
            <person name="Walker D."/>
            <person name="White B."/>
            <person name="Whitehead S."/>
            <person name="Small P.L."/>
            <person name="Brosch R."/>
            <person name="Ramakrishnan L."/>
            <person name="Fischbach M.A."/>
            <person name="Parkhill J."/>
            <person name="Cole S.T."/>
        </authorList>
    </citation>
    <scope>NUCLEOTIDE SEQUENCE [LARGE SCALE GENOMIC DNA]</scope>
    <source>
        <strain>ATCC BAA-535 / M</strain>
    </source>
</reference>
<feature type="chain" id="PRO_1000089317" description="Adenylosuccinate synthetase">
    <location>
        <begin position="1"/>
        <end position="432"/>
    </location>
</feature>
<feature type="active site" description="Proton acceptor" evidence="1">
    <location>
        <position position="13"/>
    </location>
</feature>
<feature type="active site" description="Proton donor" evidence="1">
    <location>
        <position position="41"/>
    </location>
</feature>
<feature type="binding site" evidence="1">
    <location>
        <begin position="12"/>
        <end position="18"/>
    </location>
    <ligand>
        <name>GTP</name>
        <dbReference type="ChEBI" id="CHEBI:37565"/>
    </ligand>
</feature>
<feature type="binding site" description="in other chain" evidence="1">
    <location>
        <begin position="13"/>
        <end position="16"/>
    </location>
    <ligand>
        <name>IMP</name>
        <dbReference type="ChEBI" id="CHEBI:58053"/>
        <note>ligand shared between dimeric partners</note>
    </ligand>
</feature>
<feature type="binding site" evidence="1">
    <location>
        <position position="13"/>
    </location>
    <ligand>
        <name>Mg(2+)</name>
        <dbReference type="ChEBI" id="CHEBI:18420"/>
    </ligand>
</feature>
<feature type="binding site" description="in other chain" evidence="1">
    <location>
        <begin position="38"/>
        <end position="41"/>
    </location>
    <ligand>
        <name>IMP</name>
        <dbReference type="ChEBI" id="CHEBI:58053"/>
        <note>ligand shared between dimeric partners</note>
    </ligand>
</feature>
<feature type="binding site" evidence="1">
    <location>
        <begin position="40"/>
        <end position="42"/>
    </location>
    <ligand>
        <name>GTP</name>
        <dbReference type="ChEBI" id="CHEBI:37565"/>
    </ligand>
</feature>
<feature type="binding site" evidence="1">
    <location>
        <position position="40"/>
    </location>
    <ligand>
        <name>Mg(2+)</name>
        <dbReference type="ChEBI" id="CHEBI:18420"/>
    </ligand>
</feature>
<feature type="binding site" description="in other chain" evidence="1">
    <location>
        <position position="129"/>
    </location>
    <ligand>
        <name>IMP</name>
        <dbReference type="ChEBI" id="CHEBI:58053"/>
        <note>ligand shared between dimeric partners</note>
    </ligand>
</feature>
<feature type="binding site" evidence="1">
    <location>
        <position position="143"/>
    </location>
    <ligand>
        <name>IMP</name>
        <dbReference type="ChEBI" id="CHEBI:58053"/>
        <note>ligand shared between dimeric partners</note>
    </ligand>
</feature>
<feature type="binding site" description="in other chain" evidence="1">
    <location>
        <position position="224"/>
    </location>
    <ligand>
        <name>IMP</name>
        <dbReference type="ChEBI" id="CHEBI:58053"/>
        <note>ligand shared between dimeric partners</note>
    </ligand>
</feature>
<feature type="binding site" description="in other chain" evidence="1">
    <location>
        <position position="239"/>
    </location>
    <ligand>
        <name>IMP</name>
        <dbReference type="ChEBI" id="CHEBI:58053"/>
        <note>ligand shared between dimeric partners</note>
    </ligand>
</feature>
<feature type="binding site" evidence="1">
    <location>
        <begin position="299"/>
        <end position="305"/>
    </location>
    <ligand>
        <name>substrate</name>
    </ligand>
</feature>
<feature type="binding site" description="in other chain" evidence="1">
    <location>
        <position position="303"/>
    </location>
    <ligand>
        <name>IMP</name>
        <dbReference type="ChEBI" id="CHEBI:58053"/>
        <note>ligand shared between dimeric partners</note>
    </ligand>
</feature>
<feature type="binding site" evidence="1">
    <location>
        <position position="305"/>
    </location>
    <ligand>
        <name>GTP</name>
        <dbReference type="ChEBI" id="CHEBI:37565"/>
    </ligand>
</feature>
<feature type="binding site" evidence="1">
    <location>
        <begin position="331"/>
        <end position="333"/>
    </location>
    <ligand>
        <name>GTP</name>
        <dbReference type="ChEBI" id="CHEBI:37565"/>
    </ligand>
</feature>
<feature type="binding site" evidence="1">
    <location>
        <begin position="413"/>
        <end position="415"/>
    </location>
    <ligand>
        <name>GTP</name>
        <dbReference type="ChEBI" id="CHEBI:37565"/>
    </ligand>
</feature>
<comment type="function">
    <text evidence="1">Plays an important role in the de novo pathway of purine nucleotide biosynthesis. Catalyzes the first committed step in the biosynthesis of AMP from IMP.</text>
</comment>
<comment type="catalytic activity">
    <reaction evidence="1">
        <text>IMP + L-aspartate + GTP = N(6)-(1,2-dicarboxyethyl)-AMP + GDP + phosphate + 2 H(+)</text>
        <dbReference type="Rhea" id="RHEA:15753"/>
        <dbReference type="ChEBI" id="CHEBI:15378"/>
        <dbReference type="ChEBI" id="CHEBI:29991"/>
        <dbReference type="ChEBI" id="CHEBI:37565"/>
        <dbReference type="ChEBI" id="CHEBI:43474"/>
        <dbReference type="ChEBI" id="CHEBI:57567"/>
        <dbReference type="ChEBI" id="CHEBI:58053"/>
        <dbReference type="ChEBI" id="CHEBI:58189"/>
        <dbReference type="EC" id="6.3.4.4"/>
    </reaction>
</comment>
<comment type="cofactor">
    <cofactor evidence="1">
        <name>Mg(2+)</name>
        <dbReference type="ChEBI" id="CHEBI:18420"/>
    </cofactor>
    <text evidence="1">Binds 1 Mg(2+) ion per subunit.</text>
</comment>
<comment type="pathway">
    <text evidence="1">Purine metabolism; AMP biosynthesis via de novo pathway; AMP from IMP: step 1/2.</text>
</comment>
<comment type="subunit">
    <text evidence="1">Homodimer.</text>
</comment>
<comment type="subcellular location">
    <subcellularLocation>
        <location evidence="1">Cytoplasm</location>
    </subcellularLocation>
</comment>
<comment type="similarity">
    <text evidence="1">Belongs to the adenylosuccinate synthetase family.</text>
</comment>
<accession>B2HPW4</accession>
<protein>
    <recommendedName>
        <fullName evidence="1">Adenylosuccinate synthetase</fullName>
        <shortName evidence="1">AMPSase</shortName>
        <shortName evidence="1">AdSS</shortName>
        <ecNumber evidence="1">6.3.4.4</ecNumber>
    </recommendedName>
    <alternativeName>
        <fullName evidence="1">IMP--aspartate ligase</fullName>
    </alternativeName>
</protein>
<proteinExistence type="inferred from homology"/>
<dbReference type="EC" id="6.3.4.4" evidence="1"/>
<dbReference type="EMBL" id="CP000854">
    <property type="protein sequence ID" value="ACC39141.1"/>
    <property type="molecule type" value="Genomic_DNA"/>
</dbReference>
<dbReference type="RefSeq" id="WP_012392636.1">
    <property type="nucleotide sequence ID" value="NC_010612.1"/>
</dbReference>
<dbReference type="SMR" id="B2HPW4"/>
<dbReference type="STRING" id="216594.MMAR_0680"/>
<dbReference type="KEGG" id="mmi:MMAR_0680"/>
<dbReference type="eggNOG" id="COG0104">
    <property type="taxonomic scope" value="Bacteria"/>
</dbReference>
<dbReference type="HOGENOM" id="CLU_029848_0_0_11"/>
<dbReference type="OrthoDB" id="9807553at2"/>
<dbReference type="UniPathway" id="UPA00075">
    <property type="reaction ID" value="UER00335"/>
</dbReference>
<dbReference type="Proteomes" id="UP000001190">
    <property type="component" value="Chromosome"/>
</dbReference>
<dbReference type="GO" id="GO:0005737">
    <property type="term" value="C:cytoplasm"/>
    <property type="evidence" value="ECO:0007669"/>
    <property type="project" value="UniProtKB-SubCell"/>
</dbReference>
<dbReference type="GO" id="GO:0004019">
    <property type="term" value="F:adenylosuccinate synthase activity"/>
    <property type="evidence" value="ECO:0007669"/>
    <property type="project" value="UniProtKB-UniRule"/>
</dbReference>
<dbReference type="GO" id="GO:0005525">
    <property type="term" value="F:GTP binding"/>
    <property type="evidence" value="ECO:0007669"/>
    <property type="project" value="UniProtKB-UniRule"/>
</dbReference>
<dbReference type="GO" id="GO:0000287">
    <property type="term" value="F:magnesium ion binding"/>
    <property type="evidence" value="ECO:0007669"/>
    <property type="project" value="UniProtKB-UniRule"/>
</dbReference>
<dbReference type="GO" id="GO:0044208">
    <property type="term" value="P:'de novo' AMP biosynthetic process"/>
    <property type="evidence" value="ECO:0007669"/>
    <property type="project" value="UniProtKB-UniRule"/>
</dbReference>
<dbReference type="GO" id="GO:0046040">
    <property type="term" value="P:IMP metabolic process"/>
    <property type="evidence" value="ECO:0007669"/>
    <property type="project" value="TreeGrafter"/>
</dbReference>
<dbReference type="CDD" id="cd03108">
    <property type="entry name" value="AdSS"/>
    <property type="match status" value="1"/>
</dbReference>
<dbReference type="FunFam" id="1.10.300.10:FF:000001">
    <property type="entry name" value="Adenylosuccinate synthetase"/>
    <property type="match status" value="1"/>
</dbReference>
<dbReference type="FunFam" id="3.90.170.10:FF:000001">
    <property type="entry name" value="Adenylosuccinate synthetase"/>
    <property type="match status" value="1"/>
</dbReference>
<dbReference type="Gene3D" id="3.40.440.10">
    <property type="entry name" value="Adenylosuccinate Synthetase, subunit A, domain 1"/>
    <property type="match status" value="1"/>
</dbReference>
<dbReference type="Gene3D" id="1.10.300.10">
    <property type="entry name" value="Adenylosuccinate Synthetase, subunit A, domain 2"/>
    <property type="match status" value="1"/>
</dbReference>
<dbReference type="Gene3D" id="3.90.170.10">
    <property type="entry name" value="Adenylosuccinate Synthetase, subunit A, domain 3"/>
    <property type="match status" value="1"/>
</dbReference>
<dbReference type="HAMAP" id="MF_00011">
    <property type="entry name" value="Adenylosucc_synth"/>
    <property type="match status" value="1"/>
</dbReference>
<dbReference type="InterPro" id="IPR018220">
    <property type="entry name" value="Adenylosuccin_syn_GTP-bd"/>
</dbReference>
<dbReference type="InterPro" id="IPR033128">
    <property type="entry name" value="Adenylosuccin_syn_Lys_AS"/>
</dbReference>
<dbReference type="InterPro" id="IPR042109">
    <property type="entry name" value="Adenylosuccinate_synth_dom1"/>
</dbReference>
<dbReference type="InterPro" id="IPR042110">
    <property type="entry name" value="Adenylosuccinate_synth_dom2"/>
</dbReference>
<dbReference type="InterPro" id="IPR042111">
    <property type="entry name" value="Adenylosuccinate_synth_dom3"/>
</dbReference>
<dbReference type="InterPro" id="IPR001114">
    <property type="entry name" value="Adenylosuccinate_synthetase"/>
</dbReference>
<dbReference type="InterPro" id="IPR027417">
    <property type="entry name" value="P-loop_NTPase"/>
</dbReference>
<dbReference type="NCBIfam" id="NF002223">
    <property type="entry name" value="PRK01117.1"/>
    <property type="match status" value="1"/>
</dbReference>
<dbReference type="NCBIfam" id="TIGR00184">
    <property type="entry name" value="purA"/>
    <property type="match status" value="1"/>
</dbReference>
<dbReference type="PANTHER" id="PTHR11846">
    <property type="entry name" value="ADENYLOSUCCINATE SYNTHETASE"/>
    <property type="match status" value="1"/>
</dbReference>
<dbReference type="PANTHER" id="PTHR11846:SF0">
    <property type="entry name" value="ADENYLOSUCCINATE SYNTHETASE"/>
    <property type="match status" value="1"/>
</dbReference>
<dbReference type="Pfam" id="PF00709">
    <property type="entry name" value="Adenylsucc_synt"/>
    <property type="match status" value="1"/>
</dbReference>
<dbReference type="SMART" id="SM00788">
    <property type="entry name" value="Adenylsucc_synt"/>
    <property type="match status" value="1"/>
</dbReference>
<dbReference type="SUPFAM" id="SSF52540">
    <property type="entry name" value="P-loop containing nucleoside triphosphate hydrolases"/>
    <property type="match status" value="1"/>
</dbReference>
<dbReference type="PROSITE" id="PS01266">
    <property type="entry name" value="ADENYLOSUCCIN_SYN_1"/>
    <property type="match status" value="1"/>
</dbReference>
<dbReference type="PROSITE" id="PS00513">
    <property type="entry name" value="ADENYLOSUCCIN_SYN_2"/>
    <property type="match status" value="1"/>
</dbReference>